<protein>
    <recommendedName>
        <fullName>Uncharacterized protein YNL050C</fullName>
    </recommendedName>
</protein>
<reference key="1">
    <citation type="journal article" date="1995" name="Yeast">
        <title>The sequence of a 44 420 bp fragment located on the left arm of chromosome XIV from Saccharomyces cerevisiae.</title>
        <authorList>
            <person name="Bergez P."/>
            <person name="Doignon F."/>
            <person name="Crouzet M."/>
        </authorList>
    </citation>
    <scope>NUCLEOTIDE SEQUENCE [GENOMIC DNA]</scope>
    <source>
        <strain>S288c / FY1676</strain>
    </source>
</reference>
<reference key="2">
    <citation type="journal article" date="1996" name="Yeast">
        <authorList>
            <person name="Bergez P."/>
            <person name="Doignon F."/>
            <person name="Crouzet M."/>
        </authorList>
    </citation>
    <scope>ERRATUM OF PUBMED:8533472</scope>
</reference>
<reference key="3">
    <citation type="journal article" date="1997" name="Nature">
        <title>The nucleotide sequence of Saccharomyces cerevisiae chromosome XIV and its evolutionary implications.</title>
        <authorList>
            <person name="Philippsen P."/>
            <person name="Kleine K."/>
            <person name="Poehlmann R."/>
            <person name="Duesterhoeft A."/>
            <person name="Hamberg K."/>
            <person name="Hegemann J.H."/>
            <person name="Obermaier B."/>
            <person name="Urrestarazu L.A."/>
            <person name="Aert R."/>
            <person name="Albermann K."/>
            <person name="Altmann R."/>
            <person name="Andre B."/>
            <person name="Baladron V."/>
            <person name="Ballesta J.P.G."/>
            <person name="Becam A.-M."/>
            <person name="Beinhauer J.D."/>
            <person name="Boskovic J."/>
            <person name="Buitrago M.J."/>
            <person name="Bussereau F."/>
            <person name="Coster F."/>
            <person name="Crouzet M."/>
            <person name="D'Angelo M."/>
            <person name="Dal Pero F."/>
            <person name="De Antoni A."/>
            <person name="del Rey F."/>
            <person name="Doignon F."/>
            <person name="Domdey H."/>
            <person name="Dubois E."/>
            <person name="Fiedler T.A."/>
            <person name="Fleig U."/>
            <person name="Floeth M."/>
            <person name="Fritz C."/>
            <person name="Gaillardin C."/>
            <person name="Garcia-Cantalejo J.M."/>
            <person name="Glansdorff N."/>
            <person name="Goffeau A."/>
            <person name="Gueldener U."/>
            <person name="Herbert C.J."/>
            <person name="Heumann K."/>
            <person name="Heuss-Neitzel D."/>
            <person name="Hilbert H."/>
            <person name="Hinni K."/>
            <person name="Iraqui Houssaini I."/>
            <person name="Jacquet M."/>
            <person name="Jimenez A."/>
            <person name="Jonniaux J.-L."/>
            <person name="Karpfinger-Hartl L."/>
            <person name="Lanfranchi G."/>
            <person name="Lepingle A."/>
            <person name="Levesque H."/>
            <person name="Lyck R."/>
            <person name="Maftahi M."/>
            <person name="Mallet L."/>
            <person name="Maurer C.T.C."/>
            <person name="Messenguy F."/>
            <person name="Mewes H.-W."/>
            <person name="Moestl D."/>
            <person name="Nasr F."/>
            <person name="Nicaud J.-M."/>
            <person name="Niedenthal R.K."/>
            <person name="Pandolfo D."/>
            <person name="Pierard A."/>
            <person name="Piravandi E."/>
            <person name="Planta R.J."/>
            <person name="Pohl T.M."/>
            <person name="Purnelle B."/>
            <person name="Rebischung C."/>
            <person name="Remacha M.A."/>
            <person name="Revuelta J.L."/>
            <person name="Rinke M."/>
            <person name="Saiz J.E."/>
            <person name="Sartorello F."/>
            <person name="Scherens B."/>
            <person name="Sen-Gupta M."/>
            <person name="Soler-Mira A."/>
            <person name="Urbanus J.H.M."/>
            <person name="Valle G."/>
            <person name="Van Dyck L."/>
            <person name="Verhasselt P."/>
            <person name="Vierendeels F."/>
            <person name="Vissers S."/>
            <person name="Voet M."/>
            <person name="Volckaert G."/>
            <person name="Wach A."/>
            <person name="Wambutt R."/>
            <person name="Wedler H."/>
            <person name="Zollner A."/>
            <person name="Hani J."/>
        </authorList>
    </citation>
    <scope>NUCLEOTIDE SEQUENCE [LARGE SCALE GENOMIC DNA]</scope>
    <source>
        <strain>ATCC 204508 / S288c</strain>
    </source>
</reference>
<reference key="4">
    <citation type="journal article" date="2014" name="G3 (Bethesda)">
        <title>The reference genome sequence of Saccharomyces cerevisiae: Then and now.</title>
        <authorList>
            <person name="Engel S.R."/>
            <person name="Dietrich F.S."/>
            <person name="Fisk D.G."/>
            <person name="Binkley G."/>
            <person name="Balakrishnan R."/>
            <person name="Costanzo M.C."/>
            <person name="Dwight S.S."/>
            <person name="Hitz B.C."/>
            <person name="Karra K."/>
            <person name="Nash R.S."/>
            <person name="Weng S."/>
            <person name="Wong E.D."/>
            <person name="Lloyd P."/>
            <person name="Skrzypek M.S."/>
            <person name="Miyasato S.R."/>
            <person name="Simison M."/>
            <person name="Cherry J.M."/>
        </authorList>
    </citation>
    <scope>GENOME REANNOTATION</scope>
    <source>
        <strain>ATCC 204508 / S288c</strain>
    </source>
</reference>
<organism>
    <name type="scientific">Saccharomyces cerevisiae (strain ATCC 204508 / S288c)</name>
    <name type="common">Baker's yeast</name>
    <dbReference type="NCBI Taxonomy" id="559292"/>
    <lineage>
        <taxon>Eukaryota</taxon>
        <taxon>Fungi</taxon>
        <taxon>Dikarya</taxon>
        <taxon>Ascomycota</taxon>
        <taxon>Saccharomycotina</taxon>
        <taxon>Saccharomycetes</taxon>
        <taxon>Saccharomycetales</taxon>
        <taxon>Saccharomycetaceae</taxon>
        <taxon>Saccharomyces</taxon>
    </lineage>
</organism>
<name>YNF0_YEAST</name>
<accession>P53952</accession>
<accession>D6W1C9</accession>
<evidence type="ECO:0000256" key="1">
    <source>
        <dbReference type="SAM" id="MobiDB-lite"/>
    </source>
</evidence>
<sequence length="270" mass="31437">MSEFKIVSRKDLYNEGEGLGEDYDSNSSSKNNSEHVEVLVPPTEFEFVEVERTDSSLDLKESNNSAHEQKEEKQEEFEFPLFSFGVVEASTSPAQEEQGSSTQEKDTPQTEVSLMKISLKEPEEEIINQERPKDYYFASYSADQKLQFQQSSIDYDVIIQESTKILEDDLRIRDKWPYCQGRIIDLYKHNARIELEQQKELKIKKRRPGQKQRAAKKLALERTKERDTKAREIKKQLKKKFHKRGGKKNKKKVPLNPLAKAGSTPKFRTE</sequence>
<dbReference type="EMBL" id="U12141">
    <property type="protein sequence ID" value="AAA99662.1"/>
    <property type="molecule type" value="Genomic_DNA"/>
</dbReference>
<dbReference type="EMBL" id="Z71326">
    <property type="protein sequence ID" value="CAA95919.1"/>
    <property type="molecule type" value="Genomic_DNA"/>
</dbReference>
<dbReference type="EMBL" id="BK006947">
    <property type="protein sequence ID" value="DAA10495.1"/>
    <property type="molecule type" value="Genomic_DNA"/>
</dbReference>
<dbReference type="PIR" id="S62150">
    <property type="entry name" value="S62150"/>
</dbReference>
<dbReference type="RefSeq" id="NP_014348.3">
    <property type="nucleotide sequence ID" value="NM_001182889.3"/>
</dbReference>
<dbReference type="SMR" id="P53952"/>
<dbReference type="BioGRID" id="35774">
    <property type="interactions" value="56"/>
</dbReference>
<dbReference type="DIP" id="DIP-965N"/>
<dbReference type="FunCoup" id="P53952">
    <property type="interactions" value="35"/>
</dbReference>
<dbReference type="IntAct" id="P53952">
    <property type="interactions" value="7"/>
</dbReference>
<dbReference type="MINT" id="P53952"/>
<dbReference type="STRING" id="4932.YNL050C"/>
<dbReference type="iPTMnet" id="P53952"/>
<dbReference type="PaxDb" id="4932-YNL050C"/>
<dbReference type="PeptideAtlas" id="P53952"/>
<dbReference type="EnsemblFungi" id="YNL050C_mRNA">
    <property type="protein sequence ID" value="YNL050C"/>
    <property type="gene ID" value="YNL050C"/>
</dbReference>
<dbReference type="GeneID" id="855677"/>
<dbReference type="KEGG" id="sce:YNL050C"/>
<dbReference type="AGR" id="SGD:S000004995"/>
<dbReference type="SGD" id="S000004995">
    <property type="gene designation" value="YNL050C"/>
</dbReference>
<dbReference type="VEuPathDB" id="FungiDB:YNL050C"/>
<dbReference type="eggNOG" id="ENOG502S1HU">
    <property type="taxonomic scope" value="Eukaryota"/>
</dbReference>
<dbReference type="HOGENOM" id="CLU_077719_1_0_1"/>
<dbReference type="InParanoid" id="P53952"/>
<dbReference type="OMA" id="PWKCIDL"/>
<dbReference type="OrthoDB" id="3994490at2759"/>
<dbReference type="BioCyc" id="YEAST:G3O-33083-MONOMER"/>
<dbReference type="BioGRID-ORCS" id="855677">
    <property type="hits" value="0 hits in 10 CRISPR screens"/>
</dbReference>
<dbReference type="PRO" id="PR:P53952"/>
<dbReference type="Proteomes" id="UP000002311">
    <property type="component" value="Chromosome XIV"/>
</dbReference>
<dbReference type="RNAct" id="P53952">
    <property type="molecule type" value="protein"/>
</dbReference>
<dbReference type="InterPro" id="IPR018555">
    <property type="entry name" value="DUF2011"/>
</dbReference>
<dbReference type="Pfam" id="PF09428">
    <property type="entry name" value="DUF2011"/>
    <property type="match status" value="1"/>
</dbReference>
<proteinExistence type="predicted"/>
<gene>
    <name type="ordered locus">YNL050C</name>
    <name type="ORF">N2485</name>
    <name type="ORF">YNL2485C</name>
</gene>
<keyword id="KW-1185">Reference proteome</keyword>
<feature type="chain" id="PRO_0000203452" description="Uncharacterized protein YNL050C">
    <location>
        <begin position="1"/>
        <end position="270"/>
    </location>
</feature>
<feature type="region of interest" description="Disordered" evidence="1">
    <location>
        <begin position="1"/>
        <end position="76"/>
    </location>
</feature>
<feature type="region of interest" description="Disordered" evidence="1">
    <location>
        <begin position="90"/>
        <end position="111"/>
    </location>
</feature>
<feature type="region of interest" description="Disordered" evidence="1">
    <location>
        <begin position="204"/>
        <end position="270"/>
    </location>
</feature>
<feature type="compositionally biased region" description="Basic and acidic residues" evidence="1">
    <location>
        <begin position="1"/>
        <end position="13"/>
    </location>
</feature>
<feature type="compositionally biased region" description="Basic and acidic residues" evidence="1">
    <location>
        <begin position="49"/>
        <end position="73"/>
    </location>
</feature>
<feature type="compositionally biased region" description="Polar residues" evidence="1">
    <location>
        <begin position="90"/>
        <end position="102"/>
    </location>
</feature>
<feature type="compositionally biased region" description="Basic residues" evidence="1">
    <location>
        <begin position="204"/>
        <end position="216"/>
    </location>
</feature>
<feature type="compositionally biased region" description="Basic and acidic residues" evidence="1">
    <location>
        <begin position="218"/>
        <end position="235"/>
    </location>
</feature>
<feature type="compositionally biased region" description="Basic residues" evidence="1">
    <location>
        <begin position="236"/>
        <end position="253"/>
    </location>
</feature>